<accession>Q0S749</accession>
<keyword id="KW-0349">Heme</keyword>
<keyword id="KW-0408">Iron</keyword>
<keyword id="KW-0413">Isomerase</keyword>
<keyword id="KW-0479">Metal-binding</keyword>
<sequence>MRRGSGDAAVADAIERSKTTAARNIPQLPDLPLPEDTANLRLGPDLNNELLAVLPLVGVWRGEGEGHDPDTGDYPFGQQIIVSHNGGNYLKWESQTWVLDADGEYVRPDLHETGFWRISGDGIPGSTNEEVVELLLAHSSGIVELFYGQALTQSSWELATDVVIRSTSGVLVGGAKRLYGIVEGGDLAYVEERIIADGELRPHLSARLSRYVG</sequence>
<evidence type="ECO:0000255" key="1">
    <source>
        <dbReference type="HAMAP-Rule" id="MF_01297"/>
    </source>
</evidence>
<gene>
    <name type="ordered locus">RHA1_ro04852</name>
</gene>
<protein>
    <recommendedName>
        <fullName>Peroxynitrite isomerase 2</fullName>
        <ecNumber evidence="1">5.99.-.-</ecNumber>
    </recommendedName>
    <alternativeName>
        <fullName>Ferric nitrobindin</fullName>
        <shortName>Nb(III)</shortName>
    </alternativeName>
</protein>
<reference key="1">
    <citation type="journal article" date="2006" name="Proc. Natl. Acad. Sci. U.S.A.">
        <title>The complete genome of Rhodococcus sp. RHA1 provides insights into a catabolic powerhouse.</title>
        <authorList>
            <person name="McLeod M.P."/>
            <person name="Warren R.L."/>
            <person name="Hsiao W.W.L."/>
            <person name="Araki N."/>
            <person name="Myhre M."/>
            <person name="Fernandes C."/>
            <person name="Miyazawa D."/>
            <person name="Wong W."/>
            <person name="Lillquist A.L."/>
            <person name="Wang D."/>
            <person name="Dosanjh M."/>
            <person name="Hara H."/>
            <person name="Petrescu A."/>
            <person name="Morin R.D."/>
            <person name="Yang G."/>
            <person name="Stott J.M."/>
            <person name="Schein J.E."/>
            <person name="Shin H."/>
            <person name="Smailus D."/>
            <person name="Siddiqui A.S."/>
            <person name="Marra M.A."/>
            <person name="Jones S.J.M."/>
            <person name="Holt R."/>
            <person name="Brinkman F.S.L."/>
            <person name="Miyauchi K."/>
            <person name="Fukuda M."/>
            <person name="Davies J.E."/>
            <person name="Mohn W.W."/>
            <person name="Eltis L.D."/>
        </authorList>
    </citation>
    <scope>NUCLEOTIDE SEQUENCE [LARGE SCALE GENOMIC DNA]</scope>
    <source>
        <strain>RHA1</strain>
    </source>
</reference>
<comment type="function">
    <text evidence="1">Heme-binding protein able to scavenge peroxynitrite and to protect free L-tyrosine against peroxynitrite-mediated nitration, by acting as a peroxynitrite isomerase that converts peroxynitrite to nitrate. Therefore, this protein likely plays a role in peroxynitrite sensing and in the detoxification of reactive nitrogen and oxygen species (RNS and ROS, respectively). Is able to bind nitric oxide (NO) in vitro, but may act as a sensor of peroxynitrite levels in vivo.</text>
</comment>
<comment type="catalytic activity">
    <reaction evidence="1">
        <text>peroxynitrite = nitrate</text>
        <dbReference type="Rhea" id="RHEA:63116"/>
        <dbReference type="ChEBI" id="CHEBI:17632"/>
        <dbReference type="ChEBI" id="CHEBI:25941"/>
    </reaction>
    <physiologicalReaction direction="left-to-right" evidence="1">
        <dbReference type="Rhea" id="RHEA:63117"/>
    </physiologicalReaction>
</comment>
<comment type="cofactor">
    <cofactor evidence="1">
        <name>heme b</name>
        <dbReference type="ChEBI" id="CHEBI:60344"/>
    </cofactor>
    <text evidence="1">Binds 1 heme b group per subunit, that coordinates a highly solvent-exposed Fe(III) atom.</text>
</comment>
<comment type="pathway">
    <text evidence="1">Nitrogen metabolism.</text>
</comment>
<comment type="subunit">
    <text evidence="1">Homodimer.</text>
</comment>
<comment type="domain">
    <text evidence="1">Forms a 10-stranded antiparallel beta-barrel structure able to accommodate a hydrophobic ligand in its interior. In fact, this fold hosts the heme group, which is located in a wide surface cleft.</text>
</comment>
<comment type="similarity">
    <text evidence="1">Belongs to the nitrobindin family.</text>
</comment>
<name>NB2_RHOJR</name>
<feature type="chain" id="PRO_0000356947" description="Peroxynitrite isomerase 2">
    <location>
        <begin position="1"/>
        <end position="213"/>
    </location>
</feature>
<feature type="short sequence motif" description="GXWXGXG" evidence="1">
    <location>
        <begin position="58"/>
        <end position="64"/>
    </location>
</feature>
<feature type="binding site" evidence="1">
    <location>
        <position position="176"/>
    </location>
    <ligand>
        <name>heme b</name>
        <dbReference type="ChEBI" id="CHEBI:60344"/>
    </ligand>
</feature>
<feature type="binding site" description="axial binding residue" evidence="1">
    <location>
        <position position="203"/>
    </location>
    <ligand>
        <name>heme b</name>
        <dbReference type="ChEBI" id="CHEBI:60344"/>
    </ligand>
    <ligandPart>
        <name>Fe</name>
        <dbReference type="ChEBI" id="CHEBI:18248"/>
    </ligandPart>
</feature>
<dbReference type="EC" id="5.99.-.-" evidence="1"/>
<dbReference type="EMBL" id="CP000431">
    <property type="protein sequence ID" value="ABG96637.1"/>
    <property type="molecule type" value="Genomic_DNA"/>
</dbReference>
<dbReference type="RefSeq" id="WP_009477915.1">
    <property type="nucleotide sequence ID" value="NC_008268.1"/>
</dbReference>
<dbReference type="SMR" id="Q0S749"/>
<dbReference type="KEGG" id="rha:RHA1_ro04852"/>
<dbReference type="eggNOG" id="COG4044">
    <property type="taxonomic scope" value="Bacteria"/>
</dbReference>
<dbReference type="HOGENOM" id="CLU_085483_0_0_11"/>
<dbReference type="OrthoDB" id="4804006at2"/>
<dbReference type="Proteomes" id="UP000008710">
    <property type="component" value="Chromosome"/>
</dbReference>
<dbReference type="GO" id="GO:0020037">
    <property type="term" value="F:heme binding"/>
    <property type="evidence" value="ECO:0007669"/>
    <property type="project" value="UniProtKB-UniRule"/>
</dbReference>
<dbReference type="GO" id="GO:0046872">
    <property type="term" value="F:metal ion binding"/>
    <property type="evidence" value="ECO:0007669"/>
    <property type="project" value="UniProtKB-KW"/>
</dbReference>
<dbReference type="GO" id="GO:0062213">
    <property type="term" value="F:peroxynitrite isomerase activity"/>
    <property type="evidence" value="ECO:0007669"/>
    <property type="project" value="UniProtKB-UniRule"/>
</dbReference>
<dbReference type="CDD" id="cd07828">
    <property type="entry name" value="lipocalin_heme-bd-THAP4-like"/>
    <property type="match status" value="1"/>
</dbReference>
<dbReference type="Gene3D" id="2.40.128.20">
    <property type="match status" value="1"/>
</dbReference>
<dbReference type="HAMAP" id="MF_01297">
    <property type="entry name" value="nitrobindin"/>
    <property type="match status" value="1"/>
</dbReference>
<dbReference type="InterPro" id="IPR012674">
    <property type="entry name" value="Calycin"/>
</dbReference>
<dbReference type="InterPro" id="IPR022939">
    <property type="entry name" value="Nb(III)_bact/plant"/>
</dbReference>
<dbReference type="InterPro" id="IPR045165">
    <property type="entry name" value="Nitrobindin"/>
</dbReference>
<dbReference type="InterPro" id="IPR014878">
    <property type="entry name" value="THAP4-like_heme-bd"/>
</dbReference>
<dbReference type="PANTHER" id="PTHR15854:SF4">
    <property type="entry name" value="PEROXYNITRITE ISOMERASE THAP4"/>
    <property type="match status" value="1"/>
</dbReference>
<dbReference type="PANTHER" id="PTHR15854">
    <property type="entry name" value="THAP4 PROTEIN"/>
    <property type="match status" value="1"/>
</dbReference>
<dbReference type="Pfam" id="PF08768">
    <property type="entry name" value="THAP4_heme-bd"/>
    <property type="match status" value="1"/>
</dbReference>
<dbReference type="SUPFAM" id="SSF50814">
    <property type="entry name" value="Lipocalins"/>
    <property type="match status" value="1"/>
</dbReference>
<proteinExistence type="inferred from homology"/>
<organism>
    <name type="scientific">Rhodococcus jostii (strain RHA1)</name>
    <dbReference type="NCBI Taxonomy" id="101510"/>
    <lineage>
        <taxon>Bacteria</taxon>
        <taxon>Bacillati</taxon>
        <taxon>Actinomycetota</taxon>
        <taxon>Actinomycetes</taxon>
        <taxon>Mycobacteriales</taxon>
        <taxon>Nocardiaceae</taxon>
        <taxon>Rhodococcus</taxon>
    </lineage>
</organism>